<keyword id="KW-0249">Electron transport</keyword>
<keyword id="KW-0349">Heme</keyword>
<keyword id="KW-0408">Iron</keyword>
<keyword id="KW-0472">Membrane</keyword>
<keyword id="KW-0479">Metal-binding</keyword>
<keyword id="KW-0496">Mitochondrion</keyword>
<keyword id="KW-0999">Mitochondrion inner membrane</keyword>
<keyword id="KW-0679">Respiratory chain</keyword>
<keyword id="KW-0812">Transmembrane</keyword>
<keyword id="KW-1133">Transmembrane helix</keyword>
<keyword id="KW-0813">Transport</keyword>
<keyword id="KW-0830">Ubiquinone</keyword>
<accession>Q8SJK7</accession>
<feature type="chain" id="PRO_0000061652" description="Cytochrome b">
    <location>
        <begin position="1"/>
        <end position="379"/>
    </location>
</feature>
<feature type="transmembrane region" description="Helical" evidence="2">
    <location>
        <begin position="34"/>
        <end position="54"/>
    </location>
</feature>
<feature type="transmembrane region" description="Helical" evidence="2">
    <location>
        <begin position="78"/>
        <end position="99"/>
    </location>
</feature>
<feature type="transmembrane region" description="Helical" evidence="2">
    <location>
        <begin position="114"/>
        <end position="134"/>
    </location>
</feature>
<feature type="transmembrane region" description="Helical" evidence="2">
    <location>
        <begin position="179"/>
        <end position="199"/>
    </location>
</feature>
<feature type="transmembrane region" description="Helical" evidence="2">
    <location>
        <begin position="227"/>
        <end position="247"/>
    </location>
</feature>
<feature type="transmembrane region" description="Helical" evidence="2">
    <location>
        <begin position="289"/>
        <end position="309"/>
    </location>
</feature>
<feature type="transmembrane region" description="Helical" evidence="2">
    <location>
        <begin position="321"/>
        <end position="341"/>
    </location>
</feature>
<feature type="transmembrane region" description="Helical" evidence="2">
    <location>
        <begin position="348"/>
        <end position="368"/>
    </location>
</feature>
<feature type="binding site" description="axial binding residue" evidence="2">
    <location>
        <position position="84"/>
    </location>
    <ligand>
        <name>heme b</name>
        <dbReference type="ChEBI" id="CHEBI:60344"/>
        <label>b562</label>
    </ligand>
    <ligandPart>
        <name>Fe</name>
        <dbReference type="ChEBI" id="CHEBI:18248"/>
    </ligandPart>
</feature>
<feature type="binding site" description="axial binding residue" evidence="2">
    <location>
        <position position="98"/>
    </location>
    <ligand>
        <name>heme b</name>
        <dbReference type="ChEBI" id="CHEBI:60344"/>
        <label>b566</label>
    </ligand>
    <ligandPart>
        <name>Fe</name>
        <dbReference type="ChEBI" id="CHEBI:18248"/>
    </ligandPart>
</feature>
<feature type="binding site" description="axial binding residue" evidence="2">
    <location>
        <position position="183"/>
    </location>
    <ligand>
        <name>heme b</name>
        <dbReference type="ChEBI" id="CHEBI:60344"/>
        <label>b562</label>
    </ligand>
    <ligandPart>
        <name>Fe</name>
        <dbReference type="ChEBI" id="CHEBI:18248"/>
    </ligandPart>
</feature>
<feature type="binding site" description="axial binding residue" evidence="2">
    <location>
        <position position="197"/>
    </location>
    <ligand>
        <name>heme b</name>
        <dbReference type="ChEBI" id="CHEBI:60344"/>
        <label>b566</label>
    </ligand>
    <ligandPart>
        <name>Fe</name>
        <dbReference type="ChEBI" id="CHEBI:18248"/>
    </ligandPart>
</feature>
<feature type="binding site" evidence="2">
    <location>
        <position position="202"/>
    </location>
    <ligand>
        <name>a ubiquinone</name>
        <dbReference type="ChEBI" id="CHEBI:16389"/>
    </ligand>
</feature>
<name>CYB_TERNE</name>
<protein>
    <recommendedName>
        <fullName>Cytochrome b</fullName>
    </recommendedName>
    <alternativeName>
        <fullName>Complex III subunit 3</fullName>
    </alternativeName>
    <alternativeName>
        <fullName>Complex III subunit III</fullName>
    </alternativeName>
    <alternativeName>
        <fullName>Cytochrome b-c1 complex subunit 3</fullName>
    </alternativeName>
    <alternativeName>
        <fullName>Ubiquinol-cytochrome-c reductase complex cytochrome b subunit</fullName>
    </alternativeName>
</protein>
<sequence>MSTNLRKTHPLAKIINNSFIDLPSPSNISAWWNFGSLLGTCLILQTITGIFLAMHYSSDISLAFSSVAHITRDVQYGWLIRNMHANGASLFFMCIYLHIGRGIYYGSYLYKETWNTGTALLFLTMATAFVGYVLPWGQMSFWAATVITNLLSAIPYIGNTLVQWIWGGFSVDNATLTRFFTFHFLLPFIIMGLTMVHLLFLHETGSNNPTGLNSNADKIPFHPYFSYKDLLGLILMLAFLLTLTLFFPNFLGDPDNFTPANPLSTPPHIKPEWYFLFAYAILRSIPNKLGGVLALLLSILVLFLMPALHTSKQRTTQFRPLTQILFWSLIADLLVLTWIGGQPVENPFTIIGQMASTLYFSILLILMPIAGMIENKMLS</sequence>
<dbReference type="EMBL" id="AF258873">
    <property type="protein sequence ID" value="AAL74309.1"/>
    <property type="molecule type" value="Genomic_DNA"/>
</dbReference>
<dbReference type="SMR" id="Q8SJK7"/>
<dbReference type="GO" id="GO:0005743">
    <property type="term" value="C:mitochondrial inner membrane"/>
    <property type="evidence" value="ECO:0007669"/>
    <property type="project" value="UniProtKB-SubCell"/>
</dbReference>
<dbReference type="GO" id="GO:0045275">
    <property type="term" value="C:respiratory chain complex III"/>
    <property type="evidence" value="ECO:0007669"/>
    <property type="project" value="InterPro"/>
</dbReference>
<dbReference type="GO" id="GO:0046872">
    <property type="term" value="F:metal ion binding"/>
    <property type="evidence" value="ECO:0007669"/>
    <property type="project" value="UniProtKB-KW"/>
</dbReference>
<dbReference type="GO" id="GO:0008121">
    <property type="term" value="F:ubiquinol-cytochrome-c reductase activity"/>
    <property type="evidence" value="ECO:0007669"/>
    <property type="project" value="InterPro"/>
</dbReference>
<dbReference type="GO" id="GO:0006122">
    <property type="term" value="P:mitochondrial electron transport, ubiquinol to cytochrome c"/>
    <property type="evidence" value="ECO:0007669"/>
    <property type="project" value="TreeGrafter"/>
</dbReference>
<dbReference type="CDD" id="cd00290">
    <property type="entry name" value="cytochrome_b_C"/>
    <property type="match status" value="1"/>
</dbReference>
<dbReference type="CDD" id="cd00284">
    <property type="entry name" value="Cytochrome_b_N"/>
    <property type="match status" value="1"/>
</dbReference>
<dbReference type="FunFam" id="1.20.810.10:FF:000002">
    <property type="entry name" value="Cytochrome b"/>
    <property type="match status" value="1"/>
</dbReference>
<dbReference type="Gene3D" id="1.20.810.10">
    <property type="entry name" value="Cytochrome Bc1 Complex, Chain C"/>
    <property type="match status" value="1"/>
</dbReference>
<dbReference type="InterPro" id="IPR005798">
    <property type="entry name" value="Cyt_b/b6_C"/>
</dbReference>
<dbReference type="InterPro" id="IPR036150">
    <property type="entry name" value="Cyt_b/b6_C_sf"/>
</dbReference>
<dbReference type="InterPro" id="IPR005797">
    <property type="entry name" value="Cyt_b/b6_N"/>
</dbReference>
<dbReference type="InterPro" id="IPR027387">
    <property type="entry name" value="Cytb/b6-like_sf"/>
</dbReference>
<dbReference type="InterPro" id="IPR030689">
    <property type="entry name" value="Cytochrome_b"/>
</dbReference>
<dbReference type="InterPro" id="IPR048260">
    <property type="entry name" value="Cytochrome_b_C_euk/bac"/>
</dbReference>
<dbReference type="InterPro" id="IPR048259">
    <property type="entry name" value="Cytochrome_b_N_euk/bac"/>
</dbReference>
<dbReference type="InterPro" id="IPR016174">
    <property type="entry name" value="Di-haem_cyt_TM"/>
</dbReference>
<dbReference type="PANTHER" id="PTHR19271">
    <property type="entry name" value="CYTOCHROME B"/>
    <property type="match status" value="1"/>
</dbReference>
<dbReference type="PANTHER" id="PTHR19271:SF16">
    <property type="entry name" value="CYTOCHROME B"/>
    <property type="match status" value="1"/>
</dbReference>
<dbReference type="Pfam" id="PF00032">
    <property type="entry name" value="Cytochrom_B_C"/>
    <property type="match status" value="1"/>
</dbReference>
<dbReference type="Pfam" id="PF00033">
    <property type="entry name" value="Cytochrome_B"/>
    <property type="match status" value="1"/>
</dbReference>
<dbReference type="PIRSF" id="PIRSF038885">
    <property type="entry name" value="COB"/>
    <property type="match status" value="1"/>
</dbReference>
<dbReference type="SUPFAM" id="SSF81648">
    <property type="entry name" value="a domain/subunit of cytochrome bc1 complex (Ubiquinol-cytochrome c reductase)"/>
    <property type="match status" value="1"/>
</dbReference>
<dbReference type="SUPFAM" id="SSF81342">
    <property type="entry name" value="Transmembrane di-heme cytochromes"/>
    <property type="match status" value="1"/>
</dbReference>
<dbReference type="PROSITE" id="PS51003">
    <property type="entry name" value="CYTB_CTER"/>
    <property type="match status" value="1"/>
</dbReference>
<dbReference type="PROSITE" id="PS51002">
    <property type="entry name" value="CYTB_NTER"/>
    <property type="match status" value="1"/>
</dbReference>
<gene>
    <name type="primary">MT-CYB</name>
    <name type="synonym">COB</name>
    <name type="synonym">CYTB</name>
    <name type="synonym">MTCYB</name>
</gene>
<reference key="1">
    <citation type="journal article" date="2002" name="Mol. Phylogenet. Evol.">
        <title>Molecular phylogenetics of emydine turtles: taxonomic revision and the evolution of shell kinesis.</title>
        <authorList>
            <person name="Feldman C.R."/>
            <person name="Parham J.F."/>
        </authorList>
    </citation>
    <scope>NUCLEOTIDE SEQUENCE [GENOMIC DNA]</scope>
</reference>
<proteinExistence type="inferred from homology"/>
<geneLocation type="mitochondrion"/>
<comment type="function">
    <text evidence="2">Component of the ubiquinol-cytochrome c reductase complex (complex III or cytochrome b-c1 complex) that is part of the mitochondrial respiratory chain. The b-c1 complex mediates electron transfer from ubiquinol to cytochrome c. Contributes to the generation of a proton gradient across the mitochondrial membrane that is then used for ATP synthesis.</text>
</comment>
<comment type="cofactor">
    <cofactor evidence="2">
        <name>heme b</name>
        <dbReference type="ChEBI" id="CHEBI:60344"/>
    </cofactor>
    <text evidence="2">Binds 2 heme b groups non-covalently.</text>
</comment>
<comment type="subunit">
    <text evidence="2">The cytochrome bc1 complex contains 3 respiratory subunits (MT-CYB, CYC1 and UQCRFS1), 2 core proteins (UQCRC1 and UQCRC2) and probably 6 low-molecular weight proteins.</text>
</comment>
<comment type="subcellular location">
    <subcellularLocation>
        <location evidence="2">Mitochondrion inner membrane</location>
        <topology evidence="2">Multi-pass membrane protein</topology>
    </subcellularLocation>
</comment>
<comment type="miscellaneous">
    <text evidence="1">Heme 1 (or BL or b562) is low-potential and absorbs at about 562 nm, and heme 2 (or BH or b566) is high-potential and absorbs at about 566 nm.</text>
</comment>
<comment type="similarity">
    <text evidence="3 4">Belongs to the cytochrome b family.</text>
</comment>
<comment type="caution">
    <text evidence="2">The full-length protein contains only eight transmembrane helices, not nine as predicted by bioinformatics tools.</text>
</comment>
<evidence type="ECO:0000250" key="1"/>
<evidence type="ECO:0000250" key="2">
    <source>
        <dbReference type="UniProtKB" id="P00157"/>
    </source>
</evidence>
<evidence type="ECO:0000255" key="3">
    <source>
        <dbReference type="PROSITE-ProRule" id="PRU00967"/>
    </source>
</evidence>
<evidence type="ECO:0000255" key="4">
    <source>
        <dbReference type="PROSITE-ProRule" id="PRU00968"/>
    </source>
</evidence>
<organism>
    <name type="scientific">Terrapene nelsoni</name>
    <name type="common">Spotted box turtle</name>
    <dbReference type="NCBI Taxonomy" id="158816"/>
    <lineage>
        <taxon>Eukaryota</taxon>
        <taxon>Metazoa</taxon>
        <taxon>Chordata</taxon>
        <taxon>Craniata</taxon>
        <taxon>Vertebrata</taxon>
        <taxon>Euteleostomi</taxon>
        <taxon>Archelosauria</taxon>
        <taxon>Testudinata</taxon>
        <taxon>Testudines</taxon>
        <taxon>Cryptodira</taxon>
        <taxon>Durocryptodira</taxon>
        <taxon>Testudinoidea</taxon>
        <taxon>Emydidae</taxon>
        <taxon>Terrapene</taxon>
    </lineage>
</organism>